<evidence type="ECO:0000250" key="1">
    <source>
        <dbReference type="UniProtKB" id="Q06850"/>
    </source>
</evidence>
<evidence type="ECO:0000255" key="2"/>
<evidence type="ECO:0000255" key="3">
    <source>
        <dbReference type="PROSITE-ProRule" id="PRU00159"/>
    </source>
</evidence>
<evidence type="ECO:0000255" key="4">
    <source>
        <dbReference type="PROSITE-ProRule" id="PRU00448"/>
    </source>
</evidence>
<evidence type="ECO:0000256" key="5">
    <source>
        <dbReference type="SAM" id="MobiDB-lite"/>
    </source>
</evidence>
<evidence type="ECO:0000269" key="6">
    <source>
    </source>
</evidence>
<evidence type="ECO:0000269" key="7">
    <source>
    </source>
</evidence>
<evidence type="ECO:0000269" key="8">
    <source>
    </source>
</evidence>
<evidence type="ECO:0000303" key="9">
    <source>
    </source>
</evidence>
<evidence type="ECO:0000303" key="10">
    <source>
    </source>
</evidence>
<evidence type="ECO:0000303" key="11">
    <source ref="1"/>
</evidence>
<evidence type="ECO:0000305" key="12"/>
<evidence type="ECO:0000312" key="13">
    <source>
        <dbReference type="EMBL" id="BAF21358.1"/>
    </source>
</evidence>
<evidence type="ECO:0000312" key="14">
    <source>
        <dbReference type="EMBL" id="EEE67015.1"/>
    </source>
</evidence>
<gene>
    <name evidence="9" type="primary">CPK18</name>
    <name evidence="11" type="synonym">CDPK5</name>
    <name evidence="13" type="ordered locus">Os07g0409900</name>
    <name evidence="12" type="ordered locus">LOC_Os07g22710</name>
    <name evidence="14" type="ORF">OsJ_23937</name>
</gene>
<protein>
    <recommendedName>
        <fullName evidence="12">Calcium-dependent protein kinase 18</fullName>
        <shortName evidence="12">OsCDPK18</shortName>
        <shortName evidence="9">OsCPK18</shortName>
        <ecNumber evidence="8">2.7.11.1</ecNumber>
    </recommendedName>
    <alternativeName>
        <fullName evidence="10">OsCDPK5</fullName>
    </alternativeName>
</protein>
<sequence length="512" mass="57584">MGLCSSSSARRDAGTPGGGNGAGNKDNAGRKGIVACGKRTDFGYDKDFEARYALGKLLGHGQFGYTFAAVDRRSSERVAVKRIDKNKMVLPVAVEDVKREVKILKALQGHENVVHFYNAFEDDNYVYIVMELCEGGELLDRILAKKDSRYSEKDAAVVVRQMLKVAAECHLHGLVHRDMKPENFLFKSTKEDSSLKATDFGLSDFIRPGKHFRDIVGSAYYVAPEVLKRKSGPESDVWSIGVITYILLCGRRPFWDKTEDGIFKEVLKNKPDFRRKPWPNITPCAKDFVQKLLVKDPRARLTAAQALSHEWVREGGQASDIPLDISVLHNMRQFVKYSRFKQFALRALASTLNAEELSDLRDQFNAIDVDKNGTISLEELKQALAKDVPWRLKGPRVLEIVEAIDSNTDGLVDFEEFVAATLHVHQLVEHDTEKWKSLSQAAFDKFDVDGDGYITSDELRMQTGLKGSIDPLLEEADIDRDGKISLDEFRRLLKTASMSSRNVQTPRSVHRS</sequence>
<keyword id="KW-0067">ATP-binding</keyword>
<keyword id="KW-0106">Calcium</keyword>
<keyword id="KW-1003">Cell membrane</keyword>
<keyword id="KW-0418">Kinase</keyword>
<keyword id="KW-0449">Lipoprotein</keyword>
<keyword id="KW-0472">Membrane</keyword>
<keyword id="KW-0479">Metal-binding</keyword>
<keyword id="KW-0519">Myristate</keyword>
<keyword id="KW-0547">Nucleotide-binding</keyword>
<keyword id="KW-0597">Phosphoprotein</keyword>
<keyword id="KW-0611">Plant defense</keyword>
<keyword id="KW-1185">Reference proteome</keyword>
<keyword id="KW-0677">Repeat</keyword>
<keyword id="KW-0723">Serine/threonine-protein kinase</keyword>
<keyword id="KW-0808">Transferase</keyword>
<reference key="1">
    <citation type="submission" date="2001-01" db="EMBL/GenBank/DDBJ databases">
        <title>Isolation of calcium-dependent protein kinases from rice.</title>
        <authorList>
            <person name="Cheong Y.H."/>
            <person name="Moon B.C."/>
            <person name="Cho M.J."/>
        </authorList>
    </citation>
    <scope>NUCLEOTIDE SEQUENCE [MRNA]</scope>
</reference>
<reference key="2">
    <citation type="journal article" date="2005" name="Nature">
        <title>The map-based sequence of the rice genome.</title>
        <authorList>
            <consortium name="International rice genome sequencing project (IRGSP)"/>
        </authorList>
    </citation>
    <scope>NUCLEOTIDE SEQUENCE [LARGE SCALE GENOMIC DNA]</scope>
    <source>
        <strain>cv. Nipponbare</strain>
    </source>
</reference>
<reference key="3">
    <citation type="journal article" date="2008" name="Nucleic Acids Res.">
        <title>The rice annotation project database (RAP-DB): 2008 update.</title>
        <authorList>
            <consortium name="The rice annotation project (RAP)"/>
        </authorList>
    </citation>
    <scope>GENOME REANNOTATION</scope>
    <source>
        <strain>cv. Nipponbare</strain>
    </source>
</reference>
<reference key="4">
    <citation type="journal article" date="2013" name="Rice">
        <title>Improvement of the Oryza sativa Nipponbare reference genome using next generation sequence and optical map data.</title>
        <authorList>
            <person name="Kawahara Y."/>
            <person name="de la Bastide M."/>
            <person name="Hamilton J.P."/>
            <person name="Kanamori H."/>
            <person name="McCombie W.R."/>
            <person name="Ouyang S."/>
            <person name="Schwartz D.C."/>
            <person name="Tanaka T."/>
            <person name="Wu J."/>
            <person name="Zhou S."/>
            <person name="Childs K.L."/>
            <person name="Davidson R.M."/>
            <person name="Lin H."/>
            <person name="Quesada-Ocampo L."/>
            <person name="Vaillancourt B."/>
            <person name="Sakai H."/>
            <person name="Lee S.S."/>
            <person name="Kim J."/>
            <person name="Numa H."/>
            <person name="Itoh T."/>
            <person name="Buell C.R."/>
            <person name="Matsumoto T."/>
        </authorList>
    </citation>
    <scope>GENOME REANNOTATION</scope>
    <source>
        <strain>cv. Nipponbare</strain>
    </source>
</reference>
<reference key="5">
    <citation type="journal article" date="2005" name="PLoS Biol.">
        <title>The genomes of Oryza sativa: a history of duplications.</title>
        <authorList>
            <person name="Yu J."/>
            <person name="Wang J."/>
            <person name="Lin W."/>
            <person name="Li S."/>
            <person name="Li H."/>
            <person name="Zhou J."/>
            <person name="Ni P."/>
            <person name="Dong W."/>
            <person name="Hu S."/>
            <person name="Zeng C."/>
            <person name="Zhang J."/>
            <person name="Zhang Y."/>
            <person name="Li R."/>
            <person name="Xu Z."/>
            <person name="Li S."/>
            <person name="Li X."/>
            <person name="Zheng H."/>
            <person name="Cong L."/>
            <person name="Lin L."/>
            <person name="Yin J."/>
            <person name="Geng J."/>
            <person name="Li G."/>
            <person name="Shi J."/>
            <person name="Liu J."/>
            <person name="Lv H."/>
            <person name="Li J."/>
            <person name="Wang J."/>
            <person name="Deng Y."/>
            <person name="Ran L."/>
            <person name="Shi X."/>
            <person name="Wang X."/>
            <person name="Wu Q."/>
            <person name="Li C."/>
            <person name="Ren X."/>
            <person name="Wang J."/>
            <person name="Wang X."/>
            <person name="Li D."/>
            <person name="Liu D."/>
            <person name="Zhang X."/>
            <person name="Ji Z."/>
            <person name="Zhao W."/>
            <person name="Sun Y."/>
            <person name="Zhang Z."/>
            <person name="Bao J."/>
            <person name="Han Y."/>
            <person name="Dong L."/>
            <person name="Ji J."/>
            <person name="Chen P."/>
            <person name="Wu S."/>
            <person name="Liu J."/>
            <person name="Xiao Y."/>
            <person name="Bu D."/>
            <person name="Tan J."/>
            <person name="Yang L."/>
            <person name="Ye C."/>
            <person name="Zhang J."/>
            <person name="Xu J."/>
            <person name="Zhou Y."/>
            <person name="Yu Y."/>
            <person name="Zhang B."/>
            <person name="Zhuang S."/>
            <person name="Wei H."/>
            <person name="Liu B."/>
            <person name="Lei M."/>
            <person name="Yu H."/>
            <person name="Li Y."/>
            <person name="Xu H."/>
            <person name="Wei S."/>
            <person name="He X."/>
            <person name="Fang L."/>
            <person name="Zhang Z."/>
            <person name="Zhang Y."/>
            <person name="Huang X."/>
            <person name="Su Z."/>
            <person name="Tong W."/>
            <person name="Li J."/>
            <person name="Tong Z."/>
            <person name="Li S."/>
            <person name="Ye J."/>
            <person name="Wang L."/>
            <person name="Fang L."/>
            <person name="Lei T."/>
            <person name="Chen C.-S."/>
            <person name="Chen H.-C."/>
            <person name="Xu Z."/>
            <person name="Li H."/>
            <person name="Huang H."/>
            <person name="Zhang F."/>
            <person name="Xu H."/>
            <person name="Li N."/>
            <person name="Zhao C."/>
            <person name="Li S."/>
            <person name="Dong L."/>
            <person name="Huang Y."/>
            <person name="Li L."/>
            <person name="Xi Y."/>
            <person name="Qi Q."/>
            <person name="Li W."/>
            <person name="Zhang B."/>
            <person name="Hu W."/>
            <person name="Zhang Y."/>
            <person name="Tian X."/>
            <person name="Jiao Y."/>
            <person name="Liang X."/>
            <person name="Jin J."/>
            <person name="Gao L."/>
            <person name="Zheng W."/>
            <person name="Hao B."/>
            <person name="Liu S.-M."/>
            <person name="Wang W."/>
            <person name="Yuan L."/>
            <person name="Cao M."/>
            <person name="McDermott J."/>
            <person name="Samudrala R."/>
            <person name="Wang J."/>
            <person name="Wong G.K.-S."/>
            <person name="Yang H."/>
        </authorList>
    </citation>
    <scope>NUCLEOTIDE SEQUENCE [LARGE SCALE GENOMIC DNA]</scope>
    <source>
        <strain>cv. Nipponbare</strain>
    </source>
</reference>
<reference key="6">
    <citation type="journal article" date="2003" name="Science">
        <title>Collection, mapping, and annotation of over 28,000 cDNA clones from japonica rice.</title>
        <authorList>
            <consortium name="The rice full-length cDNA consortium"/>
        </authorList>
    </citation>
    <scope>NUCLEOTIDE SEQUENCE [LARGE SCALE MRNA]</scope>
    <source>
        <strain>cv. Nipponbare</strain>
    </source>
</reference>
<reference key="7">
    <citation type="journal article" date="2005" name="Plant Cell Physiol.">
        <title>Genome-wide identification of the rice calcium-dependent protein kinase and its closely related kinase gene families: comprehensive analysis of the CDPKs gene family in rice.</title>
        <authorList>
            <person name="Asano T."/>
            <person name="Tanaka N."/>
            <person name="Yang G."/>
            <person name="Hayashi N."/>
            <person name="Komatsu S."/>
        </authorList>
    </citation>
    <scope>GENE FAMILY</scope>
    <scope>NOMENCLATURE</scope>
</reference>
<reference key="8">
    <citation type="journal article" date="2011" name="BMC Plant Biol.">
        <title>A rice calcium-dependent protein kinase is expressed in cortical root cells during the presymbiotic phase of the arbuscular mycorrhizal symbiosis.</title>
        <authorList>
            <person name="Campos-Soriano L."/>
            <person name="Gomez-Ariza J."/>
            <person name="Bonfante P."/>
            <person name="San Segundo B."/>
        </authorList>
    </citation>
    <scope>FUNCTION</scope>
    <scope>SUBCELLULAR LOCATION</scope>
    <scope>INDUCTION BY GLOMUS INTRARADICES</scope>
    <scope>MYRISTOYLATION AT GLY-2</scope>
    <scope>MUTAGENESIS OF GLY-2</scope>
</reference>
<reference key="9">
    <citation type="journal article" date="2013" name="Mol. Cells">
        <title>Rice small C2-domain proteins are phosphorylated by calcium-dependent protein kinase.</title>
        <authorList>
            <person name="Kang C.H."/>
            <person name="Moon B.C."/>
            <person name="Park H.C."/>
            <person name="Koo S.C."/>
            <person name="Chi Y.H."/>
            <person name="Cheong Y.H."/>
            <person name="Yoon B.D."/>
            <person name="Lee S.Y."/>
            <person name="Kim C.Y."/>
        </authorList>
    </citation>
    <scope>FUNCTION</scope>
</reference>
<reference key="10">
    <citation type="journal article" date="2014" name="Plant Cell">
        <title>Direct phosphorylation and activation of a mitogen-activated protein kinase by a calcium-dependent protein kinase in rice.</title>
        <authorList>
            <person name="Xie K."/>
            <person name="Chen J."/>
            <person name="Wang Q."/>
            <person name="Yang Y."/>
        </authorList>
    </citation>
    <scope>FUNCTION</scope>
    <scope>CATALYTIC ACTIVITY</scope>
    <scope>INTERACTION WITH MPK5</scope>
    <scope>MUTAGENESIS OF ASP-178</scope>
</reference>
<name>CDPKI_ORYSJ</name>
<comment type="function">
    <text evidence="1 6 7 8">May play a role in signal transduction pathways that involve calcium as a second messenger (By similarity). Functions upstream of MPK5 in a signaling pathway that represses defense gene expression and negatively regulates resistance to rice blast fungus. Phosphorylates MPK5 at Thr-14 and Thr-32 and activates MPK5 independently of MAP kinase kinase (MKK) phosphorylation (PubMed:25035404). May be involved in arbuscular mycorrhizal presymbiotic phase signaling (PubMed:21595879). Phosphorylates the elicitor-responsive protein ERG1 in vitro. Phosphorylation is calcium-dependent (PubMed:23456295).</text>
</comment>
<comment type="catalytic activity">
    <reaction evidence="8">
        <text>L-seryl-[protein] + ATP = O-phospho-L-seryl-[protein] + ADP + H(+)</text>
        <dbReference type="Rhea" id="RHEA:17989"/>
        <dbReference type="Rhea" id="RHEA-COMP:9863"/>
        <dbReference type="Rhea" id="RHEA-COMP:11604"/>
        <dbReference type="ChEBI" id="CHEBI:15378"/>
        <dbReference type="ChEBI" id="CHEBI:29999"/>
        <dbReference type="ChEBI" id="CHEBI:30616"/>
        <dbReference type="ChEBI" id="CHEBI:83421"/>
        <dbReference type="ChEBI" id="CHEBI:456216"/>
        <dbReference type="EC" id="2.7.11.1"/>
    </reaction>
</comment>
<comment type="catalytic activity">
    <reaction evidence="8">
        <text>L-threonyl-[protein] + ATP = O-phospho-L-threonyl-[protein] + ADP + H(+)</text>
        <dbReference type="Rhea" id="RHEA:46608"/>
        <dbReference type="Rhea" id="RHEA-COMP:11060"/>
        <dbReference type="Rhea" id="RHEA-COMP:11605"/>
        <dbReference type="ChEBI" id="CHEBI:15378"/>
        <dbReference type="ChEBI" id="CHEBI:30013"/>
        <dbReference type="ChEBI" id="CHEBI:30616"/>
        <dbReference type="ChEBI" id="CHEBI:61977"/>
        <dbReference type="ChEBI" id="CHEBI:456216"/>
        <dbReference type="EC" id="2.7.11.1"/>
    </reaction>
</comment>
<comment type="activity regulation">
    <text evidence="1">Activated by calcium. Autophosphorylation may play an important role in the regulation of the kinase activity.</text>
</comment>
<comment type="subunit">
    <text evidence="8">Interacts with MPK5.</text>
</comment>
<comment type="subcellular location">
    <subcellularLocation>
        <location evidence="6">Cell membrane</location>
        <topology evidence="6">Lipid-anchor</topology>
    </subcellularLocation>
</comment>
<comment type="induction">
    <text evidence="6">By the mycorrhizal fungus G.intraradices colonization in roots.</text>
</comment>
<comment type="domain">
    <text evidence="1">There are 3 contiguous domains conserved in the CDPK subfamily: a kinase domain, an autoinhibitory (junction) domain and a calmodulin-like domain. The autoinhibitory domain (318-348) inactivates kinase activity under calcium-free conditions.</text>
</comment>
<comment type="PTM">
    <text evidence="8">Autophosphorylated. Phosphorylated by MPK5.</text>
</comment>
<comment type="similarity">
    <text evidence="12">Belongs to the protein kinase superfamily. Ser/Thr protein kinase family. CDPK subfamily.</text>
</comment>
<accession>Q0D715</accession>
<accession>Q9SE24</accession>
<feature type="initiator methionine" description="Removed" evidence="2">
    <location>
        <position position="1"/>
    </location>
</feature>
<feature type="chain" id="PRO_0000437562" description="Calcium-dependent protein kinase 18">
    <location>
        <begin position="2"/>
        <end position="512"/>
    </location>
</feature>
<feature type="domain" description="Protein kinase" evidence="3">
    <location>
        <begin position="52"/>
        <end position="312"/>
    </location>
</feature>
<feature type="domain" description="EF-hand 1" evidence="4">
    <location>
        <begin position="355"/>
        <end position="390"/>
    </location>
</feature>
<feature type="domain" description="EF-hand 2" evidence="4">
    <location>
        <begin position="392"/>
        <end position="427"/>
    </location>
</feature>
<feature type="domain" description="EF-hand 3" evidence="4">
    <location>
        <begin position="434"/>
        <end position="469"/>
    </location>
</feature>
<feature type="domain" description="EF-hand 4" evidence="4">
    <location>
        <begin position="472"/>
        <end position="499"/>
    </location>
</feature>
<feature type="region of interest" description="Disordered" evidence="5">
    <location>
        <begin position="1"/>
        <end position="25"/>
    </location>
</feature>
<feature type="region of interest" description="Autoinhibitory domain" evidence="1">
    <location>
        <begin position="318"/>
        <end position="348"/>
    </location>
</feature>
<feature type="active site" description="Proton acceptor" evidence="3">
    <location>
        <position position="178"/>
    </location>
</feature>
<feature type="binding site" evidence="3">
    <location>
        <begin position="58"/>
        <end position="66"/>
    </location>
    <ligand>
        <name>ATP</name>
        <dbReference type="ChEBI" id="CHEBI:30616"/>
    </ligand>
</feature>
<feature type="binding site" evidence="3">
    <location>
        <position position="81"/>
    </location>
    <ligand>
        <name>ATP</name>
        <dbReference type="ChEBI" id="CHEBI:30616"/>
    </ligand>
</feature>
<feature type="binding site" evidence="4">
    <location>
        <position position="368"/>
    </location>
    <ligand>
        <name>Ca(2+)</name>
        <dbReference type="ChEBI" id="CHEBI:29108"/>
        <label>1</label>
    </ligand>
</feature>
<feature type="binding site" evidence="4">
    <location>
        <position position="370"/>
    </location>
    <ligand>
        <name>Ca(2+)</name>
        <dbReference type="ChEBI" id="CHEBI:29108"/>
        <label>1</label>
    </ligand>
</feature>
<feature type="binding site" evidence="4">
    <location>
        <position position="372"/>
    </location>
    <ligand>
        <name>Ca(2+)</name>
        <dbReference type="ChEBI" id="CHEBI:29108"/>
        <label>1</label>
    </ligand>
</feature>
<feature type="binding site" evidence="4">
    <location>
        <position position="374"/>
    </location>
    <ligand>
        <name>Ca(2+)</name>
        <dbReference type="ChEBI" id="CHEBI:29108"/>
        <label>1</label>
    </ligand>
</feature>
<feature type="binding site" evidence="4">
    <location>
        <position position="379"/>
    </location>
    <ligand>
        <name>Ca(2+)</name>
        <dbReference type="ChEBI" id="CHEBI:29108"/>
        <label>1</label>
    </ligand>
</feature>
<feature type="binding site" evidence="4">
    <location>
        <position position="405"/>
    </location>
    <ligand>
        <name>Ca(2+)</name>
        <dbReference type="ChEBI" id="CHEBI:29108"/>
        <label>2</label>
    </ligand>
</feature>
<feature type="binding site" evidence="4">
    <location>
        <position position="407"/>
    </location>
    <ligand>
        <name>Ca(2+)</name>
        <dbReference type="ChEBI" id="CHEBI:29108"/>
        <label>2</label>
    </ligand>
</feature>
<feature type="binding site" evidence="4">
    <location>
        <position position="409"/>
    </location>
    <ligand>
        <name>Ca(2+)</name>
        <dbReference type="ChEBI" id="CHEBI:29108"/>
        <label>2</label>
    </ligand>
</feature>
<feature type="binding site" evidence="4">
    <location>
        <position position="416"/>
    </location>
    <ligand>
        <name>Ca(2+)</name>
        <dbReference type="ChEBI" id="CHEBI:29108"/>
        <label>2</label>
    </ligand>
</feature>
<feature type="binding site" evidence="4">
    <location>
        <position position="447"/>
    </location>
    <ligand>
        <name>Ca(2+)</name>
        <dbReference type="ChEBI" id="CHEBI:29108"/>
        <label>3</label>
    </ligand>
</feature>
<feature type="binding site" evidence="4">
    <location>
        <position position="449"/>
    </location>
    <ligand>
        <name>Ca(2+)</name>
        <dbReference type="ChEBI" id="CHEBI:29108"/>
        <label>3</label>
    </ligand>
</feature>
<feature type="binding site" evidence="4">
    <location>
        <position position="451"/>
    </location>
    <ligand>
        <name>Ca(2+)</name>
        <dbReference type="ChEBI" id="CHEBI:29108"/>
        <label>3</label>
    </ligand>
</feature>
<feature type="binding site" evidence="4">
    <location>
        <position position="453"/>
    </location>
    <ligand>
        <name>Ca(2+)</name>
        <dbReference type="ChEBI" id="CHEBI:29108"/>
        <label>3</label>
    </ligand>
</feature>
<feature type="binding site" evidence="4">
    <location>
        <position position="458"/>
    </location>
    <ligand>
        <name>Ca(2+)</name>
        <dbReference type="ChEBI" id="CHEBI:29108"/>
        <label>3</label>
    </ligand>
</feature>
<feature type="binding site" evidence="4">
    <location>
        <position position="477"/>
    </location>
    <ligand>
        <name>Ca(2+)</name>
        <dbReference type="ChEBI" id="CHEBI:29108"/>
        <label>4</label>
    </ligand>
</feature>
<feature type="binding site" evidence="4">
    <location>
        <position position="479"/>
    </location>
    <ligand>
        <name>Ca(2+)</name>
        <dbReference type="ChEBI" id="CHEBI:29108"/>
        <label>4</label>
    </ligand>
</feature>
<feature type="binding site" evidence="4">
    <location>
        <position position="481"/>
    </location>
    <ligand>
        <name>Ca(2+)</name>
        <dbReference type="ChEBI" id="CHEBI:29108"/>
        <label>4</label>
    </ligand>
</feature>
<feature type="binding site" evidence="4">
    <location>
        <position position="483"/>
    </location>
    <ligand>
        <name>Ca(2+)</name>
        <dbReference type="ChEBI" id="CHEBI:29108"/>
        <label>4</label>
    </ligand>
</feature>
<feature type="binding site" evidence="4">
    <location>
        <position position="488"/>
    </location>
    <ligand>
        <name>Ca(2+)</name>
        <dbReference type="ChEBI" id="CHEBI:29108"/>
        <label>4</label>
    </ligand>
</feature>
<feature type="lipid moiety-binding region" description="N-myristoyl glycine" evidence="6">
    <location>
        <position position="2"/>
    </location>
</feature>
<feature type="mutagenesis site" description="Abolishes plasma membrane localization." evidence="6">
    <original>G</original>
    <variation>A</variation>
    <location>
        <position position="2"/>
    </location>
</feature>
<feature type="mutagenesis site" description="Loss of autophosphorylation." evidence="8">
    <original>D</original>
    <variation>A</variation>
    <location>
        <position position="178"/>
    </location>
</feature>
<organism>
    <name type="scientific">Oryza sativa subsp. japonica</name>
    <name type="common">Rice</name>
    <dbReference type="NCBI Taxonomy" id="39947"/>
    <lineage>
        <taxon>Eukaryota</taxon>
        <taxon>Viridiplantae</taxon>
        <taxon>Streptophyta</taxon>
        <taxon>Embryophyta</taxon>
        <taxon>Tracheophyta</taxon>
        <taxon>Spermatophyta</taxon>
        <taxon>Magnoliopsida</taxon>
        <taxon>Liliopsida</taxon>
        <taxon>Poales</taxon>
        <taxon>Poaceae</taxon>
        <taxon>BOP clade</taxon>
        <taxon>Oryzoideae</taxon>
        <taxon>Oryzeae</taxon>
        <taxon>Oryzinae</taxon>
        <taxon>Oryza</taxon>
        <taxon>Oryza sativa</taxon>
    </lineage>
</organism>
<dbReference type="EC" id="2.7.11.1" evidence="8"/>
<dbReference type="EMBL" id="AF194414">
    <property type="protein sequence ID" value="AAF23901.2"/>
    <property type="molecule type" value="mRNA"/>
</dbReference>
<dbReference type="EMBL" id="AP008213">
    <property type="protein sequence ID" value="BAF21358.1"/>
    <property type="molecule type" value="Genomic_DNA"/>
</dbReference>
<dbReference type="EMBL" id="AP014963">
    <property type="protein sequence ID" value="BAT01120.1"/>
    <property type="molecule type" value="Genomic_DNA"/>
</dbReference>
<dbReference type="EMBL" id="CM000144">
    <property type="protein sequence ID" value="EEE67015.1"/>
    <property type="molecule type" value="Genomic_DNA"/>
</dbReference>
<dbReference type="EMBL" id="AK121471">
    <property type="protein sequence ID" value="BAH00509.1"/>
    <property type="molecule type" value="mRNA"/>
</dbReference>
<dbReference type="RefSeq" id="XP_015647495.1">
    <property type="nucleotide sequence ID" value="XM_015792009.1"/>
</dbReference>
<dbReference type="SMR" id="Q0D715"/>
<dbReference type="FunCoup" id="Q0D715">
    <property type="interactions" value="162"/>
</dbReference>
<dbReference type="STRING" id="39947.Q0D715"/>
<dbReference type="iPTMnet" id="Q0D715"/>
<dbReference type="PaxDb" id="39947-Q0D715"/>
<dbReference type="EnsemblPlants" id="Os07t0409900-01">
    <property type="protein sequence ID" value="Os07t0409900-01"/>
    <property type="gene ID" value="Os07g0409900"/>
</dbReference>
<dbReference type="Gramene" id="Os07t0409900-01">
    <property type="protein sequence ID" value="Os07t0409900-01"/>
    <property type="gene ID" value="Os07g0409900"/>
</dbReference>
<dbReference type="KEGG" id="dosa:Os07g0409900"/>
<dbReference type="eggNOG" id="KOG0032">
    <property type="taxonomic scope" value="Eukaryota"/>
</dbReference>
<dbReference type="HOGENOM" id="CLU_000288_37_3_1"/>
<dbReference type="InParanoid" id="Q0D715"/>
<dbReference type="OMA" id="LYCHEQN"/>
<dbReference type="OrthoDB" id="40902at2759"/>
<dbReference type="Proteomes" id="UP000000763">
    <property type="component" value="Chromosome 7"/>
</dbReference>
<dbReference type="Proteomes" id="UP000007752">
    <property type="component" value="Chromosome 7"/>
</dbReference>
<dbReference type="Proteomes" id="UP000059680">
    <property type="component" value="Chromosome 7"/>
</dbReference>
<dbReference type="ExpressionAtlas" id="Q0D715">
    <property type="expression patterns" value="baseline and differential"/>
</dbReference>
<dbReference type="GO" id="GO:0005737">
    <property type="term" value="C:cytoplasm"/>
    <property type="evidence" value="ECO:0000318"/>
    <property type="project" value="GO_Central"/>
</dbReference>
<dbReference type="GO" id="GO:0005634">
    <property type="term" value="C:nucleus"/>
    <property type="evidence" value="ECO:0000318"/>
    <property type="project" value="GO_Central"/>
</dbReference>
<dbReference type="GO" id="GO:0005886">
    <property type="term" value="C:plasma membrane"/>
    <property type="evidence" value="ECO:0000314"/>
    <property type="project" value="UniProtKB"/>
</dbReference>
<dbReference type="GO" id="GO:0005524">
    <property type="term" value="F:ATP binding"/>
    <property type="evidence" value="ECO:0007669"/>
    <property type="project" value="UniProtKB-KW"/>
</dbReference>
<dbReference type="GO" id="GO:0005509">
    <property type="term" value="F:calcium ion binding"/>
    <property type="evidence" value="ECO:0007669"/>
    <property type="project" value="InterPro"/>
</dbReference>
<dbReference type="GO" id="GO:0009931">
    <property type="term" value="F:calcium-dependent protein serine/threonine kinase activity"/>
    <property type="evidence" value="ECO:0000318"/>
    <property type="project" value="GO_Central"/>
</dbReference>
<dbReference type="GO" id="GO:0004683">
    <property type="term" value="F:calcium/calmodulin-dependent protein kinase activity"/>
    <property type="evidence" value="ECO:0000318"/>
    <property type="project" value="GO_Central"/>
</dbReference>
<dbReference type="GO" id="GO:0005516">
    <property type="term" value="F:calmodulin binding"/>
    <property type="evidence" value="ECO:0000318"/>
    <property type="project" value="GO_Central"/>
</dbReference>
<dbReference type="GO" id="GO:0106310">
    <property type="term" value="F:protein serine kinase activity"/>
    <property type="evidence" value="ECO:0007669"/>
    <property type="project" value="RHEA"/>
</dbReference>
<dbReference type="GO" id="GO:0050832">
    <property type="term" value="P:defense response to fungus"/>
    <property type="evidence" value="ECO:0000314"/>
    <property type="project" value="UniProtKB"/>
</dbReference>
<dbReference type="GO" id="GO:0035556">
    <property type="term" value="P:intracellular signal transduction"/>
    <property type="evidence" value="ECO:0000318"/>
    <property type="project" value="GO_Central"/>
</dbReference>
<dbReference type="GO" id="GO:0046777">
    <property type="term" value="P:protein autophosphorylation"/>
    <property type="evidence" value="ECO:0000314"/>
    <property type="project" value="UniProtKB"/>
</dbReference>
<dbReference type="CDD" id="cd05117">
    <property type="entry name" value="STKc_CAMK"/>
    <property type="match status" value="1"/>
</dbReference>
<dbReference type="FunFam" id="1.10.238.10:FF:000158">
    <property type="entry name" value="Calcium-dependent protein kinase 28"/>
    <property type="match status" value="1"/>
</dbReference>
<dbReference type="FunFam" id="1.10.510.10:FF:000225">
    <property type="entry name" value="calcium-dependent protein kinase 28-like"/>
    <property type="match status" value="1"/>
</dbReference>
<dbReference type="FunFam" id="3.30.200.20:FF:000101">
    <property type="entry name" value="CDPK-related kinase 1"/>
    <property type="match status" value="1"/>
</dbReference>
<dbReference type="Gene3D" id="1.10.238.10">
    <property type="entry name" value="EF-hand"/>
    <property type="match status" value="2"/>
</dbReference>
<dbReference type="Gene3D" id="3.30.200.20">
    <property type="entry name" value="Phosphorylase Kinase, domain 1"/>
    <property type="match status" value="1"/>
</dbReference>
<dbReference type="Gene3D" id="1.10.510.10">
    <property type="entry name" value="Transferase(Phosphotransferase) domain 1"/>
    <property type="match status" value="1"/>
</dbReference>
<dbReference type="InterPro" id="IPR050205">
    <property type="entry name" value="CDPK_Ser/Thr_kinases"/>
</dbReference>
<dbReference type="InterPro" id="IPR011992">
    <property type="entry name" value="EF-hand-dom_pair"/>
</dbReference>
<dbReference type="InterPro" id="IPR018247">
    <property type="entry name" value="EF_Hand_1_Ca_BS"/>
</dbReference>
<dbReference type="InterPro" id="IPR002048">
    <property type="entry name" value="EF_hand_dom"/>
</dbReference>
<dbReference type="InterPro" id="IPR011009">
    <property type="entry name" value="Kinase-like_dom_sf"/>
</dbReference>
<dbReference type="InterPro" id="IPR000719">
    <property type="entry name" value="Prot_kinase_dom"/>
</dbReference>
<dbReference type="InterPro" id="IPR017441">
    <property type="entry name" value="Protein_kinase_ATP_BS"/>
</dbReference>
<dbReference type="InterPro" id="IPR008271">
    <property type="entry name" value="Ser/Thr_kinase_AS"/>
</dbReference>
<dbReference type="PANTHER" id="PTHR24349">
    <property type="entry name" value="SERINE/THREONINE-PROTEIN KINASE"/>
    <property type="match status" value="1"/>
</dbReference>
<dbReference type="Pfam" id="PF13499">
    <property type="entry name" value="EF-hand_7"/>
    <property type="match status" value="2"/>
</dbReference>
<dbReference type="Pfam" id="PF00069">
    <property type="entry name" value="Pkinase"/>
    <property type="match status" value="1"/>
</dbReference>
<dbReference type="SMART" id="SM00054">
    <property type="entry name" value="EFh"/>
    <property type="match status" value="4"/>
</dbReference>
<dbReference type="SMART" id="SM00220">
    <property type="entry name" value="S_TKc"/>
    <property type="match status" value="1"/>
</dbReference>
<dbReference type="SUPFAM" id="SSF47473">
    <property type="entry name" value="EF-hand"/>
    <property type="match status" value="1"/>
</dbReference>
<dbReference type="SUPFAM" id="SSF56112">
    <property type="entry name" value="Protein kinase-like (PK-like)"/>
    <property type="match status" value="1"/>
</dbReference>
<dbReference type="PROSITE" id="PS00018">
    <property type="entry name" value="EF_HAND_1"/>
    <property type="match status" value="4"/>
</dbReference>
<dbReference type="PROSITE" id="PS50222">
    <property type="entry name" value="EF_HAND_2"/>
    <property type="match status" value="4"/>
</dbReference>
<dbReference type="PROSITE" id="PS00107">
    <property type="entry name" value="PROTEIN_KINASE_ATP"/>
    <property type="match status" value="1"/>
</dbReference>
<dbReference type="PROSITE" id="PS50011">
    <property type="entry name" value="PROTEIN_KINASE_DOM"/>
    <property type="match status" value="1"/>
</dbReference>
<dbReference type="PROSITE" id="PS00108">
    <property type="entry name" value="PROTEIN_KINASE_ST"/>
    <property type="match status" value="1"/>
</dbReference>
<proteinExistence type="evidence at protein level"/>